<name>HSLV_CHLPB</name>
<evidence type="ECO:0000255" key="1">
    <source>
        <dbReference type="HAMAP-Rule" id="MF_00248"/>
    </source>
</evidence>
<dbReference type="EC" id="3.4.25.2" evidence="1"/>
<dbReference type="EMBL" id="CP001101">
    <property type="protein sequence ID" value="ACE04366.1"/>
    <property type="molecule type" value="Genomic_DNA"/>
</dbReference>
<dbReference type="SMR" id="B3EJG6"/>
<dbReference type="STRING" id="331678.Cphamn1_1439"/>
<dbReference type="KEGG" id="cpb:Cphamn1_1439"/>
<dbReference type="eggNOG" id="COG5405">
    <property type="taxonomic scope" value="Bacteria"/>
</dbReference>
<dbReference type="HOGENOM" id="CLU_093872_1_0_10"/>
<dbReference type="OrthoDB" id="9804884at2"/>
<dbReference type="GO" id="GO:0009376">
    <property type="term" value="C:HslUV protease complex"/>
    <property type="evidence" value="ECO:0007669"/>
    <property type="project" value="UniProtKB-UniRule"/>
</dbReference>
<dbReference type="GO" id="GO:0005839">
    <property type="term" value="C:proteasome core complex"/>
    <property type="evidence" value="ECO:0007669"/>
    <property type="project" value="InterPro"/>
</dbReference>
<dbReference type="GO" id="GO:0046872">
    <property type="term" value="F:metal ion binding"/>
    <property type="evidence" value="ECO:0007669"/>
    <property type="project" value="UniProtKB-KW"/>
</dbReference>
<dbReference type="GO" id="GO:0004298">
    <property type="term" value="F:threonine-type endopeptidase activity"/>
    <property type="evidence" value="ECO:0007669"/>
    <property type="project" value="UniProtKB-KW"/>
</dbReference>
<dbReference type="GO" id="GO:0051603">
    <property type="term" value="P:proteolysis involved in protein catabolic process"/>
    <property type="evidence" value="ECO:0007669"/>
    <property type="project" value="InterPro"/>
</dbReference>
<dbReference type="CDD" id="cd01913">
    <property type="entry name" value="protease_HslV"/>
    <property type="match status" value="1"/>
</dbReference>
<dbReference type="Gene3D" id="3.60.20.10">
    <property type="entry name" value="Glutamine Phosphoribosylpyrophosphate, subunit 1, domain 1"/>
    <property type="match status" value="1"/>
</dbReference>
<dbReference type="HAMAP" id="MF_00248">
    <property type="entry name" value="HslV"/>
    <property type="match status" value="1"/>
</dbReference>
<dbReference type="InterPro" id="IPR022281">
    <property type="entry name" value="ATP-dep_Prtase_HsIV_su"/>
</dbReference>
<dbReference type="InterPro" id="IPR029055">
    <property type="entry name" value="Ntn_hydrolases_N"/>
</dbReference>
<dbReference type="InterPro" id="IPR001353">
    <property type="entry name" value="Proteasome_sua/b"/>
</dbReference>
<dbReference type="InterPro" id="IPR023333">
    <property type="entry name" value="Proteasome_suB-type"/>
</dbReference>
<dbReference type="NCBIfam" id="TIGR03692">
    <property type="entry name" value="ATP_dep_HslV"/>
    <property type="match status" value="1"/>
</dbReference>
<dbReference type="NCBIfam" id="NF003964">
    <property type="entry name" value="PRK05456.1"/>
    <property type="match status" value="1"/>
</dbReference>
<dbReference type="PANTHER" id="PTHR32194:SF0">
    <property type="entry name" value="ATP-DEPENDENT PROTEASE SUBUNIT HSLV"/>
    <property type="match status" value="1"/>
</dbReference>
<dbReference type="PANTHER" id="PTHR32194">
    <property type="entry name" value="METALLOPROTEASE TLDD"/>
    <property type="match status" value="1"/>
</dbReference>
<dbReference type="Pfam" id="PF00227">
    <property type="entry name" value="Proteasome"/>
    <property type="match status" value="1"/>
</dbReference>
<dbReference type="PIRSF" id="PIRSF039093">
    <property type="entry name" value="HslV"/>
    <property type="match status" value="1"/>
</dbReference>
<dbReference type="SUPFAM" id="SSF56235">
    <property type="entry name" value="N-terminal nucleophile aminohydrolases (Ntn hydrolases)"/>
    <property type="match status" value="1"/>
</dbReference>
<dbReference type="PROSITE" id="PS51476">
    <property type="entry name" value="PROTEASOME_BETA_2"/>
    <property type="match status" value="1"/>
</dbReference>
<comment type="function">
    <text evidence="1">Protease subunit of a proteasome-like degradation complex believed to be a general protein degrading machinery.</text>
</comment>
<comment type="catalytic activity">
    <reaction evidence="1">
        <text>ATP-dependent cleavage of peptide bonds with broad specificity.</text>
        <dbReference type="EC" id="3.4.25.2"/>
    </reaction>
</comment>
<comment type="activity regulation">
    <text evidence="1">Allosterically activated by HslU binding.</text>
</comment>
<comment type="subunit">
    <text evidence="1">A double ring-shaped homohexamer of HslV is capped on each side by a ring-shaped HslU homohexamer. The assembly of the HslU/HslV complex is dependent on binding of ATP.</text>
</comment>
<comment type="subcellular location">
    <subcellularLocation>
        <location evidence="1">Cytoplasm</location>
    </subcellularLocation>
</comment>
<comment type="similarity">
    <text evidence="1">Belongs to the peptidase T1B family. HslV subfamily.</text>
</comment>
<organism>
    <name type="scientific">Chlorobium phaeobacteroides (strain BS1)</name>
    <dbReference type="NCBI Taxonomy" id="331678"/>
    <lineage>
        <taxon>Bacteria</taxon>
        <taxon>Pseudomonadati</taxon>
        <taxon>Chlorobiota</taxon>
        <taxon>Chlorobiia</taxon>
        <taxon>Chlorobiales</taxon>
        <taxon>Chlorobiaceae</taxon>
        <taxon>Chlorobium/Pelodictyon group</taxon>
        <taxon>Chlorobium</taxon>
    </lineage>
</organism>
<keyword id="KW-0021">Allosteric enzyme</keyword>
<keyword id="KW-0963">Cytoplasm</keyword>
<keyword id="KW-0378">Hydrolase</keyword>
<keyword id="KW-0479">Metal-binding</keyword>
<keyword id="KW-0645">Protease</keyword>
<keyword id="KW-0915">Sodium</keyword>
<keyword id="KW-0888">Threonine protease</keyword>
<sequence>MERYGKPELRATTVLGVIRNGKAALGSDGQMTLGNTVIKHSTRKIRRLRQAQIVTGFAGATADAVTLLDRFEEKLQTYGGLLERAAVELARDWRTDKYLRRLEAMLAVVSPEKALIISGTGDVIEPEDGIVAIGSGSMFALAAARSLMKHTDLNAADIVRESLLIAADICIYTNDHIVLEEV</sequence>
<accession>B3EJG6</accession>
<feature type="chain" id="PRO_1000100886" description="ATP-dependent protease subunit HslV">
    <location>
        <begin position="1"/>
        <end position="182"/>
    </location>
</feature>
<feature type="active site" evidence="1">
    <location>
        <position position="12"/>
    </location>
</feature>
<feature type="binding site" evidence="1">
    <location>
        <position position="167"/>
    </location>
    <ligand>
        <name>Na(+)</name>
        <dbReference type="ChEBI" id="CHEBI:29101"/>
    </ligand>
</feature>
<feature type="binding site" evidence="1">
    <location>
        <position position="170"/>
    </location>
    <ligand>
        <name>Na(+)</name>
        <dbReference type="ChEBI" id="CHEBI:29101"/>
    </ligand>
</feature>
<feature type="binding site" evidence="1">
    <location>
        <position position="173"/>
    </location>
    <ligand>
        <name>Na(+)</name>
        <dbReference type="ChEBI" id="CHEBI:29101"/>
    </ligand>
</feature>
<proteinExistence type="inferred from homology"/>
<reference key="1">
    <citation type="submission" date="2008-06" db="EMBL/GenBank/DDBJ databases">
        <title>Complete sequence of Chlorobium phaeobacteroides BS1.</title>
        <authorList>
            <consortium name="US DOE Joint Genome Institute"/>
            <person name="Lucas S."/>
            <person name="Copeland A."/>
            <person name="Lapidus A."/>
            <person name="Glavina del Rio T."/>
            <person name="Dalin E."/>
            <person name="Tice H."/>
            <person name="Bruce D."/>
            <person name="Goodwin L."/>
            <person name="Pitluck S."/>
            <person name="Schmutz J."/>
            <person name="Larimer F."/>
            <person name="Land M."/>
            <person name="Hauser L."/>
            <person name="Kyrpides N."/>
            <person name="Ovchinnikova G."/>
            <person name="Li T."/>
            <person name="Liu Z."/>
            <person name="Zhao F."/>
            <person name="Overmann J."/>
            <person name="Bryant D.A."/>
            <person name="Richardson P."/>
        </authorList>
    </citation>
    <scope>NUCLEOTIDE SEQUENCE [LARGE SCALE GENOMIC DNA]</scope>
    <source>
        <strain>BS1</strain>
    </source>
</reference>
<gene>
    <name evidence="1" type="primary">hslV</name>
    <name type="ordered locus">Cphamn1_1439</name>
</gene>
<protein>
    <recommendedName>
        <fullName evidence="1">ATP-dependent protease subunit HslV</fullName>
        <ecNumber evidence="1">3.4.25.2</ecNumber>
    </recommendedName>
</protein>